<comment type="function">
    <text evidence="2">One of the essential components for the initiation of protein synthesis. Protects formylmethionyl-tRNA from spontaneous hydrolysis and promotes its binding to the 30S ribosomal subunits. Also involved in the hydrolysis of GTP during the formation of the 70S ribosomal complex.</text>
</comment>
<comment type="subcellular location">
    <subcellularLocation>
        <location evidence="2">Cytoplasm</location>
    </subcellularLocation>
</comment>
<comment type="similarity">
    <text evidence="2">Belongs to the TRAFAC class translation factor GTPase superfamily. Classic translation factor GTPase family. IF-2 subfamily.</text>
</comment>
<comment type="sequence caution" evidence="4">
    <conflict type="erroneous initiation">
        <sequence resource="EMBL-CDS" id="ABC78555"/>
    </conflict>
</comment>
<keyword id="KW-0963">Cytoplasm</keyword>
<keyword id="KW-0342">GTP-binding</keyword>
<keyword id="KW-0396">Initiation factor</keyword>
<keyword id="KW-0547">Nucleotide-binding</keyword>
<keyword id="KW-0648">Protein biosynthesis</keyword>
<keyword id="KW-1185">Reference proteome</keyword>
<feature type="chain" id="PRO_0000335516" description="Translation initiation factor IF-2">
    <location>
        <begin position="1"/>
        <end position="919"/>
    </location>
</feature>
<feature type="domain" description="tr-type G">
    <location>
        <begin position="420"/>
        <end position="589"/>
    </location>
</feature>
<feature type="region of interest" description="Disordered" evidence="3">
    <location>
        <begin position="93"/>
        <end position="145"/>
    </location>
</feature>
<feature type="region of interest" description="Disordered" evidence="3">
    <location>
        <begin position="158"/>
        <end position="279"/>
    </location>
</feature>
<feature type="region of interest" description="G1" evidence="1">
    <location>
        <begin position="429"/>
        <end position="436"/>
    </location>
</feature>
<feature type="region of interest" description="G2" evidence="1">
    <location>
        <begin position="454"/>
        <end position="458"/>
    </location>
</feature>
<feature type="region of interest" description="G3" evidence="1">
    <location>
        <begin position="475"/>
        <end position="478"/>
    </location>
</feature>
<feature type="region of interest" description="G4" evidence="1">
    <location>
        <begin position="529"/>
        <end position="532"/>
    </location>
</feature>
<feature type="region of interest" description="G5" evidence="1">
    <location>
        <begin position="565"/>
        <end position="567"/>
    </location>
</feature>
<feature type="compositionally biased region" description="Basic and acidic residues" evidence="3">
    <location>
        <begin position="93"/>
        <end position="107"/>
    </location>
</feature>
<feature type="compositionally biased region" description="Pro residues" evidence="3">
    <location>
        <begin position="136"/>
        <end position="145"/>
    </location>
</feature>
<feature type="compositionally biased region" description="Basic and acidic residues" evidence="3">
    <location>
        <begin position="158"/>
        <end position="171"/>
    </location>
</feature>
<feature type="compositionally biased region" description="Low complexity" evidence="3">
    <location>
        <begin position="172"/>
        <end position="193"/>
    </location>
</feature>
<feature type="compositionally biased region" description="Basic and acidic residues" evidence="3">
    <location>
        <begin position="194"/>
        <end position="203"/>
    </location>
</feature>
<feature type="compositionally biased region" description="Basic and acidic residues" evidence="3">
    <location>
        <begin position="256"/>
        <end position="279"/>
    </location>
</feature>
<feature type="binding site" evidence="2">
    <location>
        <begin position="429"/>
        <end position="436"/>
    </location>
    <ligand>
        <name>GTP</name>
        <dbReference type="ChEBI" id="CHEBI:37565"/>
    </ligand>
</feature>
<feature type="binding site" evidence="2">
    <location>
        <begin position="475"/>
        <end position="479"/>
    </location>
    <ligand>
        <name>GTP</name>
        <dbReference type="ChEBI" id="CHEBI:37565"/>
    </ligand>
</feature>
<feature type="binding site" evidence="2">
    <location>
        <begin position="529"/>
        <end position="532"/>
    </location>
    <ligand>
        <name>GTP</name>
        <dbReference type="ChEBI" id="CHEBI:37565"/>
    </ligand>
</feature>
<evidence type="ECO:0000250" key="1"/>
<evidence type="ECO:0000255" key="2">
    <source>
        <dbReference type="HAMAP-Rule" id="MF_00100"/>
    </source>
</evidence>
<evidence type="ECO:0000256" key="3">
    <source>
        <dbReference type="SAM" id="MobiDB-lite"/>
    </source>
</evidence>
<evidence type="ECO:0000305" key="4"/>
<sequence length="919" mass="101214">MSKKRVYELARELGIDNKELISRLEKLGIAVKSHSGTLEDSEVDRVTKEFHARGSREMVEQRIKTTVIRRRAVRVPEKEAVLEKVPVEMEKEMGKALPEEVPEKIAPSRETPPAKVVKPRPVVPEKKIPAAGEKPLAPPEKPAEPVAPPIAEILKQEKIQPPEKFAEEPLKKPAVIEPEKAAAAPKAVPGEAKPLPRTERVQEQGKPVPGRKEGRTPVSRRPAETRFPAKPAPQPEMARKQVVAAAPGRAVPQEKGAPKTEAEKPRKKIKLPDETRKGEQIPARKKTVLKKGPEKTDFRGTLEEEIIERAVRPPRWKEEKKAAPVKMKKTEITVPKAIKRRIRVGEAITVGDLAKKMGVKAGEVINKLMRMGLMATINQSIDFDAASLIATEFEYQVEPAGMEYDESMFKVESSVENLKPRAPVVTIMGHVDHGKTSLLDAIRKTRVTEGEAGGITQAIGAYRVNLKGREIVFLDTPGHEAFTAMRARGAQVTDIVVLVVAADDGVMDQTVEAINHSKIAGVPIIVAINKIDKPEADPGRIKQALTEYELVPEEWGGDTIFSEVSAKQKIGIEELLELILLQADVLELKADPDRPARGVVIEARLDRGRGPVATVLIQEGTLHEGDAFVSKTEYGRVRAMNDDQGRRIKEAGPATPVEVIGFSRVPQASAEFNAVEDEKKARSIGDYWMRKEREKELSATSKITLEQLYEKMKEGVKELNVILRADVQGSLEALSDALTKLSTDDIKLKVIHGSTGAITETDVMLASASNAIIIGFNVRPDARVAEIAEAEGVDIKLYDIIYNVIADVRAAMEGLLEPEYREVVLGRAEVRDLFRVPKVGTVAGSFVIDGKVTRKANVKLVRDGVVVFDGKIGSLKRFKDDVKEVLSGFECGIGIEGFNDLRMGDMIEAYINEKVERKL</sequence>
<proteinExistence type="inferred from homology"/>
<name>IF2_SYNAS</name>
<accession>Q2LWU6</accession>
<organism>
    <name type="scientific">Syntrophus aciditrophicus (strain SB)</name>
    <dbReference type="NCBI Taxonomy" id="56780"/>
    <lineage>
        <taxon>Bacteria</taxon>
        <taxon>Pseudomonadati</taxon>
        <taxon>Thermodesulfobacteriota</taxon>
        <taxon>Syntrophia</taxon>
        <taxon>Syntrophales</taxon>
        <taxon>Syntrophaceae</taxon>
        <taxon>Syntrophus</taxon>
    </lineage>
</organism>
<protein>
    <recommendedName>
        <fullName evidence="2">Translation initiation factor IF-2</fullName>
    </recommendedName>
</protein>
<reference key="1">
    <citation type="journal article" date="2007" name="Proc. Natl. Acad. Sci. U.S.A.">
        <title>The genome of Syntrophus aciditrophicus: life at the thermodynamic limit of microbial growth.</title>
        <authorList>
            <person name="McInerney M.J."/>
            <person name="Rohlin L."/>
            <person name="Mouttaki H."/>
            <person name="Kim U."/>
            <person name="Krupp R.S."/>
            <person name="Rios-Hernandez L."/>
            <person name="Sieber J."/>
            <person name="Struchtemeyer C.G."/>
            <person name="Bhattacharyya A."/>
            <person name="Campbell J.W."/>
            <person name="Gunsalus R.P."/>
        </authorList>
    </citation>
    <scope>NUCLEOTIDE SEQUENCE [LARGE SCALE GENOMIC DNA]</scope>
    <source>
        <strain>SB</strain>
    </source>
</reference>
<gene>
    <name evidence="2" type="primary">infB</name>
    <name type="ordered locus">SYNAS_26760</name>
    <name type="ORF">SYN_01787</name>
</gene>
<dbReference type="EMBL" id="CP000252">
    <property type="protein sequence ID" value="ABC78555.1"/>
    <property type="status" value="ALT_INIT"/>
    <property type="molecule type" value="Genomic_DNA"/>
</dbReference>
<dbReference type="RefSeq" id="WP_041585107.1">
    <property type="nucleotide sequence ID" value="NC_007759.1"/>
</dbReference>
<dbReference type="SMR" id="Q2LWU6"/>
<dbReference type="FunCoup" id="Q2LWU6">
    <property type="interactions" value="528"/>
</dbReference>
<dbReference type="STRING" id="56780.SYN_01787"/>
<dbReference type="KEGG" id="sat:SYN_01787"/>
<dbReference type="eggNOG" id="COG0532">
    <property type="taxonomic scope" value="Bacteria"/>
</dbReference>
<dbReference type="HOGENOM" id="CLU_006301_5_1_7"/>
<dbReference type="InParanoid" id="Q2LWU6"/>
<dbReference type="OrthoDB" id="9811804at2"/>
<dbReference type="Proteomes" id="UP000001933">
    <property type="component" value="Chromosome"/>
</dbReference>
<dbReference type="GO" id="GO:0005829">
    <property type="term" value="C:cytosol"/>
    <property type="evidence" value="ECO:0007669"/>
    <property type="project" value="TreeGrafter"/>
</dbReference>
<dbReference type="GO" id="GO:0005525">
    <property type="term" value="F:GTP binding"/>
    <property type="evidence" value="ECO:0007669"/>
    <property type="project" value="UniProtKB-KW"/>
</dbReference>
<dbReference type="GO" id="GO:0003924">
    <property type="term" value="F:GTPase activity"/>
    <property type="evidence" value="ECO:0007669"/>
    <property type="project" value="UniProtKB-UniRule"/>
</dbReference>
<dbReference type="GO" id="GO:0003743">
    <property type="term" value="F:translation initiation factor activity"/>
    <property type="evidence" value="ECO:0007669"/>
    <property type="project" value="UniProtKB-UniRule"/>
</dbReference>
<dbReference type="CDD" id="cd01887">
    <property type="entry name" value="IF2_eIF5B"/>
    <property type="match status" value="1"/>
</dbReference>
<dbReference type="CDD" id="cd03702">
    <property type="entry name" value="IF2_mtIF2_II"/>
    <property type="match status" value="1"/>
</dbReference>
<dbReference type="CDD" id="cd03692">
    <property type="entry name" value="mtIF2_IVc"/>
    <property type="match status" value="1"/>
</dbReference>
<dbReference type="FunFam" id="2.40.30.10:FF:000007">
    <property type="entry name" value="Translation initiation factor IF-2"/>
    <property type="match status" value="1"/>
</dbReference>
<dbReference type="FunFam" id="2.40.30.10:FF:000008">
    <property type="entry name" value="Translation initiation factor IF-2"/>
    <property type="match status" value="1"/>
</dbReference>
<dbReference type="FunFam" id="3.40.50.10050:FF:000001">
    <property type="entry name" value="Translation initiation factor IF-2"/>
    <property type="match status" value="1"/>
</dbReference>
<dbReference type="FunFam" id="3.40.50.300:FF:000019">
    <property type="entry name" value="Translation initiation factor IF-2"/>
    <property type="match status" value="1"/>
</dbReference>
<dbReference type="Gene3D" id="1.10.10.2480">
    <property type="match status" value="1"/>
</dbReference>
<dbReference type="Gene3D" id="3.40.50.300">
    <property type="entry name" value="P-loop containing nucleotide triphosphate hydrolases"/>
    <property type="match status" value="1"/>
</dbReference>
<dbReference type="Gene3D" id="2.40.30.10">
    <property type="entry name" value="Translation factors"/>
    <property type="match status" value="2"/>
</dbReference>
<dbReference type="Gene3D" id="3.40.50.10050">
    <property type="entry name" value="Translation initiation factor IF- 2, domain 3"/>
    <property type="match status" value="1"/>
</dbReference>
<dbReference type="HAMAP" id="MF_00100_B">
    <property type="entry name" value="IF_2_B"/>
    <property type="match status" value="1"/>
</dbReference>
<dbReference type="InterPro" id="IPR053905">
    <property type="entry name" value="EF-G-like_DII"/>
</dbReference>
<dbReference type="InterPro" id="IPR044145">
    <property type="entry name" value="IF2_II"/>
</dbReference>
<dbReference type="InterPro" id="IPR006847">
    <property type="entry name" value="IF2_N"/>
</dbReference>
<dbReference type="InterPro" id="IPR027417">
    <property type="entry name" value="P-loop_NTPase"/>
</dbReference>
<dbReference type="InterPro" id="IPR005225">
    <property type="entry name" value="Small_GTP-bd"/>
</dbReference>
<dbReference type="InterPro" id="IPR000795">
    <property type="entry name" value="T_Tr_GTP-bd_dom"/>
</dbReference>
<dbReference type="InterPro" id="IPR000178">
    <property type="entry name" value="TF_IF2_bacterial-like"/>
</dbReference>
<dbReference type="InterPro" id="IPR015760">
    <property type="entry name" value="TIF_IF2"/>
</dbReference>
<dbReference type="InterPro" id="IPR023115">
    <property type="entry name" value="TIF_IF2_dom3"/>
</dbReference>
<dbReference type="InterPro" id="IPR036925">
    <property type="entry name" value="TIF_IF2_dom3_sf"/>
</dbReference>
<dbReference type="InterPro" id="IPR009000">
    <property type="entry name" value="Transl_B-barrel_sf"/>
</dbReference>
<dbReference type="NCBIfam" id="TIGR00487">
    <property type="entry name" value="IF-2"/>
    <property type="match status" value="1"/>
</dbReference>
<dbReference type="NCBIfam" id="TIGR00231">
    <property type="entry name" value="small_GTP"/>
    <property type="match status" value="1"/>
</dbReference>
<dbReference type="PANTHER" id="PTHR43381:SF5">
    <property type="entry name" value="TR-TYPE G DOMAIN-CONTAINING PROTEIN"/>
    <property type="match status" value="1"/>
</dbReference>
<dbReference type="PANTHER" id="PTHR43381">
    <property type="entry name" value="TRANSLATION INITIATION FACTOR IF-2-RELATED"/>
    <property type="match status" value="1"/>
</dbReference>
<dbReference type="Pfam" id="PF22042">
    <property type="entry name" value="EF-G_D2"/>
    <property type="match status" value="1"/>
</dbReference>
<dbReference type="Pfam" id="PF00009">
    <property type="entry name" value="GTP_EFTU"/>
    <property type="match status" value="1"/>
</dbReference>
<dbReference type="Pfam" id="PF11987">
    <property type="entry name" value="IF-2"/>
    <property type="match status" value="1"/>
</dbReference>
<dbReference type="Pfam" id="PF04760">
    <property type="entry name" value="IF2_N"/>
    <property type="match status" value="2"/>
</dbReference>
<dbReference type="SUPFAM" id="SSF52156">
    <property type="entry name" value="Initiation factor IF2/eIF5b, domain 3"/>
    <property type="match status" value="1"/>
</dbReference>
<dbReference type="SUPFAM" id="SSF52540">
    <property type="entry name" value="P-loop containing nucleoside triphosphate hydrolases"/>
    <property type="match status" value="1"/>
</dbReference>
<dbReference type="SUPFAM" id="SSF50447">
    <property type="entry name" value="Translation proteins"/>
    <property type="match status" value="2"/>
</dbReference>
<dbReference type="PROSITE" id="PS51722">
    <property type="entry name" value="G_TR_2"/>
    <property type="match status" value="1"/>
</dbReference>
<dbReference type="PROSITE" id="PS01176">
    <property type="entry name" value="IF2"/>
    <property type="match status" value="1"/>
</dbReference>